<sequence length="182" mass="20900">MKEVINSLNYLSNWPSAGSFEFNTNILETNIINISVVLGVLVYFGKGVLSNLLDNRKSKILNTIQNSEELCKGATDQLEKARARLWEVEKRVDEIRVNGYLQIEQEKENLIKAASANLKQLEDSKNETIFFEQQKVIDQVRQQISYQALQKALAIMNNCLNTDLHLRMIDYNIGRLRAKKPN</sequence>
<organism>
    <name type="scientific">Welwitschia mirabilis</name>
    <name type="common">Tree tumbo</name>
    <name type="synonym">Welwitschia bainesii</name>
    <dbReference type="NCBI Taxonomy" id="3377"/>
    <lineage>
        <taxon>Eukaryota</taxon>
        <taxon>Viridiplantae</taxon>
        <taxon>Streptophyta</taxon>
        <taxon>Embryophyta</taxon>
        <taxon>Tracheophyta</taxon>
        <taxon>Spermatophyta</taxon>
        <taxon>Gnetopsida</taxon>
        <taxon>Gnetidae</taxon>
        <taxon>Welwitschiales</taxon>
        <taxon>Welwitschiaceae</taxon>
        <taxon>Welwitschia</taxon>
    </lineage>
</organism>
<protein>
    <recommendedName>
        <fullName evidence="1">ATP synthase subunit b, chloroplastic</fullName>
    </recommendedName>
    <alternativeName>
        <fullName evidence="1">ATP synthase F(0) sector subunit b</fullName>
    </alternativeName>
    <alternativeName>
        <fullName evidence="1">ATPase subunit I</fullName>
    </alternativeName>
</protein>
<reference key="1">
    <citation type="journal article" date="2008" name="BMC Evol. Biol.">
        <title>The complete plastid genome sequence of Welwitschia mirabilis: an unusually compact plastome with accelerated divergence rates.</title>
        <authorList>
            <person name="McCoy S.R."/>
            <person name="Kuehl J.V."/>
            <person name="Boore J.L."/>
            <person name="Raubeson L.A."/>
        </authorList>
    </citation>
    <scope>NUCLEOTIDE SEQUENCE [LARGE SCALE GENOMIC DNA]</scope>
</reference>
<keyword id="KW-0066">ATP synthesis</keyword>
<keyword id="KW-0138">CF(0)</keyword>
<keyword id="KW-0150">Chloroplast</keyword>
<keyword id="KW-0375">Hydrogen ion transport</keyword>
<keyword id="KW-0406">Ion transport</keyword>
<keyword id="KW-0472">Membrane</keyword>
<keyword id="KW-0934">Plastid</keyword>
<keyword id="KW-0793">Thylakoid</keyword>
<keyword id="KW-0812">Transmembrane</keyword>
<keyword id="KW-1133">Transmembrane helix</keyword>
<keyword id="KW-0813">Transport</keyword>
<geneLocation type="chloroplast"/>
<evidence type="ECO:0000255" key="1">
    <source>
        <dbReference type="HAMAP-Rule" id="MF_01398"/>
    </source>
</evidence>
<accession>B2Y1W1</accession>
<dbReference type="EMBL" id="EU342371">
    <property type="protein sequence ID" value="ABY26791.1"/>
    <property type="molecule type" value="Genomic_DNA"/>
</dbReference>
<dbReference type="RefSeq" id="YP_001876578.1">
    <property type="nucleotide sequence ID" value="NC_010654.1"/>
</dbReference>
<dbReference type="SMR" id="B2Y1W1"/>
<dbReference type="GeneID" id="6276165"/>
<dbReference type="GO" id="GO:0009535">
    <property type="term" value="C:chloroplast thylakoid membrane"/>
    <property type="evidence" value="ECO:0007669"/>
    <property type="project" value="UniProtKB-SubCell"/>
</dbReference>
<dbReference type="GO" id="GO:0045259">
    <property type="term" value="C:proton-transporting ATP synthase complex"/>
    <property type="evidence" value="ECO:0007669"/>
    <property type="project" value="UniProtKB-KW"/>
</dbReference>
<dbReference type="GO" id="GO:0046933">
    <property type="term" value="F:proton-transporting ATP synthase activity, rotational mechanism"/>
    <property type="evidence" value="ECO:0007669"/>
    <property type="project" value="UniProtKB-UniRule"/>
</dbReference>
<dbReference type="CDD" id="cd06503">
    <property type="entry name" value="ATP-synt_Fo_b"/>
    <property type="match status" value="1"/>
</dbReference>
<dbReference type="HAMAP" id="MF_01398">
    <property type="entry name" value="ATP_synth_b_bprime"/>
    <property type="match status" value="1"/>
</dbReference>
<dbReference type="InterPro" id="IPR002146">
    <property type="entry name" value="ATP_synth_b/b'su_bac/chlpt"/>
</dbReference>
<dbReference type="PANTHER" id="PTHR34264">
    <property type="entry name" value="ATP SYNTHASE SUBUNIT B, CHLOROPLASTIC"/>
    <property type="match status" value="1"/>
</dbReference>
<dbReference type="PANTHER" id="PTHR34264:SF3">
    <property type="entry name" value="ATP SYNTHASE SUBUNIT B, CHLOROPLASTIC"/>
    <property type="match status" value="1"/>
</dbReference>
<dbReference type="Pfam" id="PF00430">
    <property type="entry name" value="ATP-synt_B"/>
    <property type="match status" value="1"/>
</dbReference>
<feature type="chain" id="PRO_0000368984" description="ATP synthase subunit b, chloroplastic">
    <location>
        <begin position="1"/>
        <end position="182"/>
    </location>
</feature>
<feature type="transmembrane region" description="Helical" evidence="1">
    <location>
        <begin position="31"/>
        <end position="53"/>
    </location>
</feature>
<comment type="function">
    <text evidence="1">F(1)F(0) ATP synthase produces ATP from ADP in the presence of a proton or sodium gradient. F-type ATPases consist of two structural domains, F(1) containing the extramembraneous catalytic core and F(0) containing the membrane proton channel, linked together by a central stalk and a peripheral stalk. During catalysis, ATP synthesis in the catalytic domain of F(1) is coupled via a rotary mechanism of the central stalk subunits to proton translocation.</text>
</comment>
<comment type="function">
    <text evidence="1">Component of the F(0) channel, it forms part of the peripheral stalk, linking F(1) to F(0).</text>
</comment>
<comment type="subunit">
    <text evidence="1">F-type ATPases have 2 components, F(1) - the catalytic core - and F(0) - the membrane proton channel. F(1) has five subunits: alpha(3), beta(3), gamma(1), delta(1), epsilon(1). F(0) has four main subunits: a(1), b(1), b'(1) and c(10-14). The alpha and beta chains form an alternating ring which encloses part of the gamma chain. F(1) is attached to F(0) by a central stalk formed by the gamma and epsilon chains, while a peripheral stalk is formed by the delta, b and b' chains.</text>
</comment>
<comment type="subcellular location">
    <subcellularLocation>
        <location evidence="1">Plastid</location>
        <location evidence="1">Chloroplast thylakoid membrane</location>
        <topology evidence="1">Single-pass membrane protein</topology>
    </subcellularLocation>
</comment>
<comment type="miscellaneous">
    <text>In plastids the F-type ATPase is also known as CF(1)CF(0).</text>
</comment>
<comment type="similarity">
    <text evidence="1">Belongs to the ATPase B chain family.</text>
</comment>
<name>ATPF_WELMI</name>
<proteinExistence type="inferred from homology"/>
<gene>
    <name evidence="1" type="primary">atpF</name>
</gene>